<gene>
    <name evidence="1" type="primary">rplF</name>
    <name type="ordered locus">Mlg_0473</name>
</gene>
<dbReference type="EMBL" id="CP000453">
    <property type="protein sequence ID" value="ABI55827.1"/>
    <property type="molecule type" value="Genomic_DNA"/>
</dbReference>
<dbReference type="RefSeq" id="WP_011628222.1">
    <property type="nucleotide sequence ID" value="NC_008340.1"/>
</dbReference>
<dbReference type="SMR" id="Q0ABG0"/>
<dbReference type="KEGG" id="aeh:Mlg_0473"/>
<dbReference type="eggNOG" id="COG0097">
    <property type="taxonomic scope" value="Bacteria"/>
</dbReference>
<dbReference type="HOGENOM" id="CLU_065464_1_2_6"/>
<dbReference type="OrthoDB" id="9805007at2"/>
<dbReference type="Proteomes" id="UP000001962">
    <property type="component" value="Chromosome"/>
</dbReference>
<dbReference type="GO" id="GO:0022625">
    <property type="term" value="C:cytosolic large ribosomal subunit"/>
    <property type="evidence" value="ECO:0007669"/>
    <property type="project" value="TreeGrafter"/>
</dbReference>
<dbReference type="GO" id="GO:0019843">
    <property type="term" value="F:rRNA binding"/>
    <property type="evidence" value="ECO:0007669"/>
    <property type="project" value="UniProtKB-UniRule"/>
</dbReference>
<dbReference type="GO" id="GO:0003735">
    <property type="term" value="F:structural constituent of ribosome"/>
    <property type="evidence" value="ECO:0007669"/>
    <property type="project" value="InterPro"/>
</dbReference>
<dbReference type="GO" id="GO:0002181">
    <property type="term" value="P:cytoplasmic translation"/>
    <property type="evidence" value="ECO:0007669"/>
    <property type="project" value="TreeGrafter"/>
</dbReference>
<dbReference type="FunFam" id="3.90.930.12:FF:000001">
    <property type="entry name" value="50S ribosomal protein L6"/>
    <property type="match status" value="1"/>
</dbReference>
<dbReference type="FunFam" id="3.90.930.12:FF:000002">
    <property type="entry name" value="50S ribosomal protein L6"/>
    <property type="match status" value="1"/>
</dbReference>
<dbReference type="Gene3D" id="3.90.930.12">
    <property type="entry name" value="Ribosomal protein L6, alpha-beta domain"/>
    <property type="match status" value="2"/>
</dbReference>
<dbReference type="HAMAP" id="MF_01365_B">
    <property type="entry name" value="Ribosomal_uL6_B"/>
    <property type="match status" value="1"/>
</dbReference>
<dbReference type="InterPro" id="IPR000702">
    <property type="entry name" value="Ribosomal_uL6-like"/>
</dbReference>
<dbReference type="InterPro" id="IPR036789">
    <property type="entry name" value="Ribosomal_uL6-like_a/b-dom_sf"/>
</dbReference>
<dbReference type="InterPro" id="IPR020040">
    <property type="entry name" value="Ribosomal_uL6_a/b-dom"/>
</dbReference>
<dbReference type="InterPro" id="IPR019906">
    <property type="entry name" value="Ribosomal_uL6_bac-type"/>
</dbReference>
<dbReference type="InterPro" id="IPR002358">
    <property type="entry name" value="Ribosomal_uL6_CS"/>
</dbReference>
<dbReference type="NCBIfam" id="TIGR03654">
    <property type="entry name" value="L6_bact"/>
    <property type="match status" value="1"/>
</dbReference>
<dbReference type="PANTHER" id="PTHR11655">
    <property type="entry name" value="60S/50S RIBOSOMAL PROTEIN L6/L9"/>
    <property type="match status" value="1"/>
</dbReference>
<dbReference type="PANTHER" id="PTHR11655:SF14">
    <property type="entry name" value="LARGE RIBOSOMAL SUBUNIT PROTEIN UL6M"/>
    <property type="match status" value="1"/>
</dbReference>
<dbReference type="Pfam" id="PF00347">
    <property type="entry name" value="Ribosomal_L6"/>
    <property type="match status" value="2"/>
</dbReference>
<dbReference type="PIRSF" id="PIRSF002162">
    <property type="entry name" value="Ribosomal_L6"/>
    <property type="match status" value="1"/>
</dbReference>
<dbReference type="PRINTS" id="PR00059">
    <property type="entry name" value="RIBOSOMALL6"/>
</dbReference>
<dbReference type="SUPFAM" id="SSF56053">
    <property type="entry name" value="Ribosomal protein L6"/>
    <property type="match status" value="2"/>
</dbReference>
<dbReference type="PROSITE" id="PS00525">
    <property type="entry name" value="RIBOSOMAL_L6_1"/>
    <property type="match status" value="1"/>
</dbReference>
<organism>
    <name type="scientific">Alkalilimnicola ehrlichii (strain ATCC BAA-1101 / DSM 17681 / MLHE-1)</name>
    <dbReference type="NCBI Taxonomy" id="187272"/>
    <lineage>
        <taxon>Bacteria</taxon>
        <taxon>Pseudomonadati</taxon>
        <taxon>Pseudomonadota</taxon>
        <taxon>Gammaproteobacteria</taxon>
        <taxon>Chromatiales</taxon>
        <taxon>Ectothiorhodospiraceae</taxon>
        <taxon>Alkalilimnicola</taxon>
    </lineage>
</organism>
<evidence type="ECO:0000255" key="1">
    <source>
        <dbReference type="HAMAP-Rule" id="MF_01365"/>
    </source>
</evidence>
<evidence type="ECO:0000305" key="2"/>
<keyword id="KW-1185">Reference proteome</keyword>
<keyword id="KW-0687">Ribonucleoprotein</keyword>
<keyword id="KW-0689">Ribosomal protein</keyword>
<keyword id="KW-0694">RNA-binding</keyword>
<keyword id="KW-0699">rRNA-binding</keyword>
<protein>
    <recommendedName>
        <fullName evidence="1">Large ribosomal subunit protein uL6</fullName>
    </recommendedName>
    <alternativeName>
        <fullName evidence="2">50S ribosomal protein L6</fullName>
    </alternativeName>
</protein>
<comment type="function">
    <text evidence="1">This protein binds to the 23S rRNA, and is important in its secondary structure. It is located near the subunit interface in the base of the L7/L12 stalk, and near the tRNA binding site of the peptidyltransferase center.</text>
</comment>
<comment type="subunit">
    <text evidence="1">Part of the 50S ribosomal subunit.</text>
</comment>
<comment type="similarity">
    <text evidence="1">Belongs to the universal ribosomal protein uL6 family.</text>
</comment>
<name>RL6_ALKEH</name>
<feature type="chain" id="PRO_0000265210" description="Large ribosomal subunit protein uL6">
    <location>
        <begin position="1"/>
        <end position="177"/>
    </location>
</feature>
<accession>Q0ABG0</accession>
<proteinExistence type="inferred from homology"/>
<reference key="1">
    <citation type="submission" date="2006-08" db="EMBL/GenBank/DDBJ databases">
        <title>Complete sequence of Alkalilimnicola ehrilichei MLHE-1.</title>
        <authorList>
            <person name="Copeland A."/>
            <person name="Lucas S."/>
            <person name="Lapidus A."/>
            <person name="Barry K."/>
            <person name="Detter J.C."/>
            <person name="Glavina del Rio T."/>
            <person name="Hammon N."/>
            <person name="Israni S."/>
            <person name="Dalin E."/>
            <person name="Tice H."/>
            <person name="Pitluck S."/>
            <person name="Sims D."/>
            <person name="Brettin T."/>
            <person name="Bruce D."/>
            <person name="Han C."/>
            <person name="Tapia R."/>
            <person name="Gilna P."/>
            <person name="Schmutz J."/>
            <person name="Larimer F."/>
            <person name="Land M."/>
            <person name="Hauser L."/>
            <person name="Kyrpides N."/>
            <person name="Mikhailova N."/>
            <person name="Oremland R.S."/>
            <person name="Hoeft S.E."/>
            <person name="Switzer-Blum J."/>
            <person name="Kulp T."/>
            <person name="King G."/>
            <person name="Tabita R."/>
            <person name="Witte B."/>
            <person name="Santini J.M."/>
            <person name="Basu P."/>
            <person name="Hollibaugh J.T."/>
            <person name="Xie G."/>
            <person name="Stolz J.F."/>
            <person name="Richardson P."/>
        </authorList>
    </citation>
    <scope>NUCLEOTIDE SEQUENCE [LARGE SCALE GENOMIC DNA]</scope>
    <source>
        <strain>ATCC BAA-1101 / DSM 17681 / MLHE-1</strain>
    </source>
</reference>
<sequence length="177" mass="19377">MSRVAKRPVKVPSGVEVKLDGQDVKVKGPKGELAWTVHDWVAVEQADGELRVQAQLDDRRAVALAGTTRALLNNMVTGVSQGFERKLELRGVGYRAQVQGKNLNLTLGFSHPVDYPVPEGITIEAPSQTEIVVKGADKQQVGEVAAQIRAFRPPEPYKGKGVRYADERVVLKEAKKK</sequence>